<name>G6PI_CERS4</name>
<accession>Q3J2U4</accession>
<gene>
    <name evidence="1" type="primary">pgi</name>
    <name type="ordered locus">RHOS4_13220</name>
    <name type="ORF">RSP_2736</name>
</gene>
<dbReference type="EC" id="5.3.1.9" evidence="1"/>
<dbReference type="EMBL" id="CP000143">
    <property type="protein sequence ID" value="ABA78890.1"/>
    <property type="molecule type" value="Genomic_DNA"/>
</dbReference>
<dbReference type="RefSeq" id="WP_011337700.1">
    <property type="nucleotide sequence ID" value="NC_007493.2"/>
</dbReference>
<dbReference type="RefSeq" id="YP_352791.1">
    <property type="nucleotide sequence ID" value="NC_007493.2"/>
</dbReference>
<dbReference type="SMR" id="Q3J2U4"/>
<dbReference type="STRING" id="272943.RSP_2736"/>
<dbReference type="EnsemblBacteria" id="ABA78890">
    <property type="protein sequence ID" value="ABA78890"/>
    <property type="gene ID" value="RSP_2736"/>
</dbReference>
<dbReference type="GeneID" id="3720465"/>
<dbReference type="KEGG" id="rsp:RSP_2736"/>
<dbReference type="PATRIC" id="fig|272943.9.peg.1663"/>
<dbReference type="eggNOG" id="COG0166">
    <property type="taxonomic scope" value="Bacteria"/>
</dbReference>
<dbReference type="OrthoDB" id="140919at2"/>
<dbReference type="PhylomeDB" id="Q3J2U4"/>
<dbReference type="UniPathway" id="UPA00109">
    <property type="reaction ID" value="UER00181"/>
</dbReference>
<dbReference type="UniPathway" id="UPA00138"/>
<dbReference type="Proteomes" id="UP000002703">
    <property type="component" value="Chromosome 1"/>
</dbReference>
<dbReference type="GO" id="GO:0005829">
    <property type="term" value="C:cytosol"/>
    <property type="evidence" value="ECO:0007669"/>
    <property type="project" value="TreeGrafter"/>
</dbReference>
<dbReference type="GO" id="GO:0097367">
    <property type="term" value="F:carbohydrate derivative binding"/>
    <property type="evidence" value="ECO:0007669"/>
    <property type="project" value="InterPro"/>
</dbReference>
<dbReference type="GO" id="GO:0004347">
    <property type="term" value="F:glucose-6-phosphate isomerase activity"/>
    <property type="evidence" value="ECO:0007669"/>
    <property type="project" value="UniProtKB-UniRule"/>
</dbReference>
<dbReference type="GO" id="GO:0048029">
    <property type="term" value="F:monosaccharide binding"/>
    <property type="evidence" value="ECO:0007669"/>
    <property type="project" value="TreeGrafter"/>
</dbReference>
<dbReference type="GO" id="GO:0006094">
    <property type="term" value="P:gluconeogenesis"/>
    <property type="evidence" value="ECO:0007669"/>
    <property type="project" value="UniProtKB-UniRule"/>
</dbReference>
<dbReference type="GO" id="GO:0051156">
    <property type="term" value="P:glucose 6-phosphate metabolic process"/>
    <property type="evidence" value="ECO:0007669"/>
    <property type="project" value="TreeGrafter"/>
</dbReference>
<dbReference type="GO" id="GO:0006096">
    <property type="term" value="P:glycolytic process"/>
    <property type="evidence" value="ECO:0007669"/>
    <property type="project" value="UniProtKB-UniRule"/>
</dbReference>
<dbReference type="CDD" id="cd05015">
    <property type="entry name" value="SIS_PGI_1"/>
    <property type="match status" value="1"/>
</dbReference>
<dbReference type="CDD" id="cd05016">
    <property type="entry name" value="SIS_PGI_2"/>
    <property type="match status" value="1"/>
</dbReference>
<dbReference type="Gene3D" id="1.10.1390.10">
    <property type="match status" value="1"/>
</dbReference>
<dbReference type="Gene3D" id="3.40.50.10490">
    <property type="entry name" value="Glucose-6-phosphate isomerase like protein, domain 1"/>
    <property type="match status" value="2"/>
</dbReference>
<dbReference type="HAMAP" id="MF_00473">
    <property type="entry name" value="G6P_isomerase"/>
    <property type="match status" value="1"/>
</dbReference>
<dbReference type="InterPro" id="IPR001672">
    <property type="entry name" value="G6P_Isomerase"/>
</dbReference>
<dbReference type="InterPro" id="IPR023096">
    <property type="entry name" value="G6P_Isomerase_C"/>
</dbReference>
<dbReference type="InterPro" id="IPR018189">
    <property type="entry name" value="Phosphoglucose_isomerase_CS"/>
</dbReference>
<dbReference type="InterPro" id="IPR046348">
    <property type="entry name" value="SIS_dom_sf"/>
</dbReference>
<dbReference type="InterPro" id="IPR035476">
    <property type="entry name" value="SIS_PGI_1"/>
</dbReference>
<dbReference type="InterPro" id="IPR035482">
    <property type="entry name" value="SIS_PGI_2"/>
</dbReference>
<dbReference type="NCBIfam" id="NF001211">
    <property type="entry name" value="PRK00179.1"/>
    <property type="match status" value="1"/>
</dbReference>
<dbReference type="PANTHER" id="PTHR11469">
    <property type="entry name" value="GLUCOSE-6-PHOSPHATE ISOMERASE"/>
    <property type="match status" value="1"/>
</dbReference>
<dbReference type="PANTHER" id="PTHR11469:SF1">
    <property type="entry name" value="GLUCOSE-6-PHOSPHATE ISOMERASE"/>
    <property type="match status" value="1"/>
</dbReference>
<dbReference type="Pfam" id="PF00342">
    <property type="entry name" value="PGI"/>
    <property type="match status" value="1"/>
</dbReference>
<dbReference type="PRINTS" id="PR00662">
    <property type="entry name" value="G6PISOMERASE"/>
</dbReference>
<dbReference type="SUPFAM" id="SSF53697">
    <property type="entry name" value="SIS domain"/>
    <property type="match status" value="1"/>
</dbReference>
<dbReference type="PROSITE" id="PS00765">
    <property type="entry name" value="P_GLUCOSE_ISOMERASE_1"/>
    <property type="match status" value="1"/>
</dbReference>
<dbReference type="PROSITE" id="PS00174">
    <property type="entry name" value="P_GLUCOSE_ISOMERASE_2"/>
    <property type="match status" value="1"/>
</dbReference>
<dbReference type="PROSITE" id="PS51463">
    <property type="entry name" value="P_GLUCOSE_ISOMERASE_3"/>
    <property type="match status" value="1"/>
</dbReference>
<proteinExistence type="inferred from homology"/>
<keyword id="KW-0963">Cytoplasm</keyword>
<keyword id="KW-0312">Gluconeogenesis</keyword>
<keyword id="KW-0324">Glycolysis</keyword>
<keyword id="KW-0413">Isomerase</keyword>
<keyword id="KW-1185">Reference proteome</keyword>
<feature type="chain" id="PRO_0000230931" description="Glucose-6-phosphate isomerase">
    <location>
        <begin position="1"/>
        <end position="533"/>
    </location>
</feature>
<feature type="active site" description="Proton donor" evidence="1">
    <location>
        <position position="341"/>
    </location>
</feature>
<feature type="active site" evidence="1">
    <location>
        <position position="372"/>
    </location>
</feature>
<feature type="active site" evidence="1">
    <location>
        <position position="501"/>
    </location>
</feature>
<comment type="function">
    <text evidence="1">Catalyzes the reversible isomerization of glucose-6-phosphate to fructose-6-phosphate.</text>
</comment>
<comment type="catalytic activity">
    <reaction evidence="1">
        <text>alpha-D-glucose 6-phosphate = beta-D-fructose 6-phosphate</text>
        <dbReference type="Rhea" id="RHEA:11816"/>
        <dbReference type="ChEBI" id="CHEBI:57634"/>
        <dbReference type="ChEBI" id="CHEBI:58225"/>
        <dbReference type="EC" id="5.3.1.9"/>
    </reaction>
</comment>
<comment type="pathway">
    <text evidence="1">Carbohydrate biosynthesis; gluconeogenesis.</text>
</comment>
<comment type="pathway">
    <text evidence="1">Carbohydrate degradation; glycolysis; D-glyceraldehyde 3-phosphate and glycerone phosphate from D-glucose: step 2/4.</text>
</comment>
<comment type="subcellular location">
    <subcellularLocation>
        <location evidence="1">Cytoplasm</location>
    </subcellularLocation>
</comment>
<comment type="similarity">
    <text evidence="1">Belongs to the GPI family.</text>
</comment>
<organism>
    <name type="scientific">Cereibacter sphaeroides (strain ATCC 17023 / DSM 158 / JCM 6121 / CCUG 31486 / LMG 2827 / NBRC 12203 / NCIMB 8253 / ATH 2.4.1.)</name>
    <name type="common">Rhodobacter sphaeroides</name>
    <dbReference type="NCBI Taxonomy" id="272943"/>
    <lineage>
        <taxon>Bacteria</taxon>
        <taxon>Pseudomonadati</taxon>
        <taxon>Pseudomonadota</taxon>
        <taxon>Alphaproteobacteria</taxon>
        <taxon>Rhodobacterales</taxon>
        <taxon>Paracoccaceae</taxon>
        <taxon>Cereibacter</taxon>
    </lineage>
</organism>
<protein>
    <recommendedName>
        <fullName evidence="1">Glucose-6-phosphate isomerase</fullName>
        <shortName evidence="1">GPI</shortName>
        <ecNumber evidence="1">5.3.1.9</ecNumber>
    </recommendedName>
    <alternativeName>
        <fullName evidence="1">Phosphoglucose isomerase</fullName>
        <shortName evidence="1">PGI</shortName>
    </alternativeName>
    <alternativeName>
        <fullName evidence="1">Phosphohexose isomerase</fullName>
        <shortName evidence="1">PHI</shortName>
    </alternativeName>
</protein>
<sequence>MKQIWQALKAHQQAVEHRAILDLFTDPRRAETFSTRLGDMLFDWSKTNIDHTARDLLIDLAGAAGVAEKREAMFSGAKINETEGRAVLHTALRNMDRPVRVDGVDVTPALRETHARMQAFVRDLRSGRFTGQGGPITDVVNIGIGGSDLGPAMACLALAPYADGPRCHFVSNVDGAHIHDTLQDLDPATTLVIVASKTFTTIETMTNAETAKRWMAKRVSDPAAQFAAVSTAADKTAAFGIDASRVFGFEDWVGGRYSMWGPIGLALMIAIGPEAFDAFLAGGAEMDRHFREAPFAENLPVLLALVGLWHNQICGHATRAVLPYDQRLARLPAYLQQLEMESNGKRVAMDGHELTHHSGPIVWGEPGTNGQHAFYQLIHQGSRIVPCEFLVAREGHEPDLAHQHLLLVSNCLAQSEALLRGRSVEEARAILGKKGLTGSELERQARHRVFPGNRPSTVLAYEKLTPATLGRIVALYEHRVFVEGVILGINSYDQWGVELGKELALALQPMLEGRAGTEGKDGSTAQLVAYLRR</sequence>
<evidence type="ECO:0000255" key="1">
    <source>
        <dbReference type="HAMAP-Rule" id="MF_00473"/>
    </source>
</evidence>
<reference key="1">
    <citation type="submission" date="2005-09" db="EMBL/GenBank/DDBJ databases">
        <title>Complete sequence of chromosome 1 of Rhodobacter sphaeroides 2.4.1.</title>
        <authorList>
            <person name="Copeland A."/>
            <person name="Lucas S."/>
            <person name="Lapidus A."/>
            <person name="Barry K."/>
            <person name="Detter J.C."/>
            <person name="Glavina T."/>
            <person name="Hammon N."/>
            <person name="Israni S."/>
            <person name="Pitluck S."/>
            <person name="Richardson P."/>
            <person name="Mackenzie C."/>
            <person name="Choudhary M."/>
            <person name="Larimer F."/>
            <person name="Hauser L.J."/>
            <person name="Land M."/>
            <person name="Donohue T.J."/>
            <person name="Kaplan S."/>
        </authorList>
    </citation>
    <scope>NUCLEOTIDE SEQUENCE [LARGE SCALE GENOMIC DNA]</scope>
    <source>
        <strain>ATCC 17023 / DSM 158 / JCM 6121 / CCUG 31486 / LMG 2827 / NBRC 12203 / NCIMB 8253 / ATH 2.4.1.</strain>
    </source>
</reference>